<dbReference type="EMBL" id="Z49701">
    <property type="protein sequence ID" value="CAA89726.1"/>
    <property type="molecule type" value="Genomic_DNA"/>
</dbReference>
<dbReference type="EMBL" id="AY723783">
    <property type="protein sequence ID" value="AAU09700.1"/>
    <property type="molecule type" value="Genomic_DNA"/>
</dbReference>
<dbReference type="EMBL" id="BK006938">
    <property type="protein sequence ID" value="DAA12081.1"/>
    <property type="molecule type" value="Genomic_DNA"/>
</dbReference>
<dbReference type="PIR" id="S54536">
    <property type="entry name" value="S54536"/>
</dbReference>
<dbReference type="RefSeq" id="NP_010526.1">
    <property type="nucleotide sequence ID" value="NM_001180548.1"/>
</dbReference>
<dbReference type="PDB" id="5ZWN">
    <property type="method" value="EM"/>
    <property type="resolution" value="3.30 A"/>
    <property type="chains" value="W=1-492"/>
</dbReference>
<dbReference type="PDB" id="6G90">
    <property type="method" value="EM"/>
    <property type="resolution" value="4.00 A"/>
    <property type="chains" value="G=1-492"/>
</dbReference>
<dbReference type="PDB" id="6N7P">
    <property type="method" value="EM"/>
    <property type="resolution" value="3.60 A"/>
    <property type="chains" value="G=1-492"/>
</dbReference>
<dbReference type="PDB" id="6N7R">
    <property type="method" value="EM"/>
    <property type="resolution" value="3.20 A"/>
    <property type="chains" value="G=1-492"/>
</dbReference>
<dbReference type="PDB" id="6N7X">
    <property type="method" value="EM"/>
    <property type="resolution" value="3.60 A"/>
    <property type="chains" value="G=1-492"/>
</dbReference>
<dbReference type="PDB" id="7OQC">
    <property type="method" value="EM"/>
    <property type="resolution" value="4.10 A"/>
    <property type="chains" value="G=1-492"/>
</dbReference>
<dbReference type="PDB" id="7OQE">
    <property type="method" value="EM"/>
    <property type="resolution" value="5.90 A"/>
    <property type="chains" value="G=1-492"/>
</dbReference>
<dbReference type="PDB" id="8W2O">
    <property type="method" value="EM"/>
    <property type="resolution" value="3.49 A"/>
    <property type="chains" value="G=1-492"/>
</dbReference>
<dbReference type="PDBsum" id="5ZWN"/>
<dbReference type="PDBsum" id="6G90"/>
<dbReference type="PDBsum" id="6N7P"/>
<dbReference type="PDBsum" id="6N7R"/>
<dbReference type="PDBsum" id="6N7X"/>
<dbReference type="PDBsum" id="7OQC"/>
<dbReference type="PDBsum" id="7OQE"/>
<dbReference type="PDBsum" id="8W2O"/>
<dbReference type="EMDB" id="EMD-0360"/>
<dbReference type="EMDB" id="EMD-0361"/>
<dbReference type="EMDB" id="EMD-13029"/>
<dbReference type="EMDB" id="EMD-13033"/>
<dbReference type="EMDB" id="EMD-4364"/>
<dbReference type="EMDB" id="EMD-43753"/>
<dbReference type="EMDB" id="EMD-6973"/>
<dbReference type="EMDB" id="EMD-8622"/>
<dbReference type="SMR" id="Q03782"/>
<dbReference type="BioGRID" id="32291">
    <property type="interactions" value="295"/>
</dbReference>
<dbReference type="ComplexPortal" id="CPX-23">
    <property type="entry name" value="U1 small nuclear ribonucleoprotein complex"/>
</dbReference>
<dbReference type="DIP" id="DIP-6514N"/>
<dbReference type="FunCoup" id="Q03782">
    <property type="interactions" value="202"/>
</dbReference>
<dbReference type="IntAct" id="Q03782">
    <property type="interactions" value="28"/>
</dbReference>
<dbReference type="MINT" id="Q03782"/>
<dbReference type="STRING" id="4932.YDR240C"/>
<dbReference type="iPTMnet" id="Q03782"/>
<dbReference type="PaxDb" id="4932-YDR240C"/>
<dbReference type="PeptideAtlas" id="Q03782"/>
<dbReference type="EnsemblFungi" id="YDR240C_mRNA">
    <property type="protein sequence ID" value="YDR240C"/>
    <property type="gene ID" value="YDR240C"/>
</dbReference>
<dbReference type="GeneID" id="851827"/>
<dbReference type="KEGG" id="sce:YDR240C"/>
<dbReference type="AGR" id="SGD:S000002648"/>
<dbReference type="SGD" id="S000002648">
    <property type="gene designation" value="SNU56"/>
</dbReference>
<dbReference type="VEuPathDB" id="FungiDB:YDR240C"/>
<dbReference type="eggNOG" id="ENOG502R3P5">
    <property type="taxonomic scope" value="Eukaryota"/>
</dbReference>
<dbReference type="HOGENOM" id="CLU_554561_0_0_1"/>
<dbReference type="InParanoid" id="Q03782"/>
<dbReference type="OMA" id="WKNLDRI"/>
<dbReference type="OrthoDB" id="4034976at2759"/>
<dbReference type="BioCyc" id="YEAST:G3O-29815-MONOMER"/>
<dbReference type="BioGRID-ORCS" id="851827">
    <property type="hits" value="3 hits in 10 CRISPR screens"/>
</dbReference>
<dbReference type="PRO" id="PR:Q03782"/>
<dbReference type="Proteomes" id="UP000002311">
    <property type="component" value="Chromosome IV"/>
</dbReference>
<dbReference type="RNAct" id="Q03782">
    <property type="molecule type" value="protein"/>
</dbReference>
<dbReference type="GO" id="GO:0000243">
    <property type="term" value="C:commitment complex"/>
    <property type="evidence" value="ECO:0000353"/>
    <property type="project" value="SGD"/>
</dbReference>
<dbReference type="GO" id="GO:0005634">
    <property type="term" value="C:nucleus"/>
    <property type="evidence" value="ECO:0000303"/>
    <property type="project" value="ComplexPortal"/>
</dbReference>
<dbReference type="GO" id="GO:0005681">
    <property type="term" value="C:spliceosomal complex"/>
    <property type="evidence" value="ECO:0000303"/>
    <property type="project" value="ComplexPortal"/>
</dbReference>
<dbReference type="GO" id="GO:0005685">
    <property type="term" value="C:U1 snRNP"/>
    <property type="evidence" value="ECO:0000314"/>
    <property type="project" value="SGD"/>
</dbReference>
<dbReference type="GO" id="GO:0071004">
    <property type="term" value="C:U2-type prespliceosome"/>
    <property type="evidence" value="ECO:0000314"/>
    <property type="project" value="SGD"/>
</dbReference>
<dbReference type="GO" id="GO:0003729">
    <property type="term" value="F:mRNA binding"/>
    <property type="evidence" value="ECO:0000353"/>
    <property type="project" value="SGD"/>
</dbReference>
<dbReference type="GO" id="GO:0000395">
    <property type="term" value="P:mRNA 5'-splice site recognition"/>
    <property type="evidence" value="ECO:0000303"/>
    <property type="project" value="ComplexPortal"/>
</dbReference>
<dbReference type="GO" id="GO:0000398">
    <property type="term" value="P:mRNA splicing, via spliceosome"/>
    <property type="evidence" value="ECO:0000353"/>
    <property type="project" value="SGD"/>
</dbReference>
<dbReference type="InterPro" id="IPR043954">
    <property type="entry name" value="Snu56_snRNP"/>
</dbReference>
<dbReference type="Pfam" id="PF19097">
    <property type="entry name" value="Snu56_snRNP"/>
    <property type="match status" value="1"/>
</dbReference>
<sequence length="492" mass="56498">MRPRRRGLAYHHTKPKGQLSQGHYPTTSNDGQRRKVGNSEAFQSFDIWKNLDRIRSTKKNAGQFIKGSLLILPMRTEDKQQFDECMDELHKYISKDILRCYPQKEQKDEGMLFYIVLKDFNILDSCFVLSVLLAFQKRLWMAPSEKSYFRVPKNINLTGSFYLPKNIETGRGHIITSYRREQPSSSIVEVGFNVVPDFQQFQVKACHVSKFMNELSNFFSQVEFGKCEANVINYFKREYNRTYSQISLALYELPLIGDGLFDIKSYISKTRPIIETSKAQMIKHISEMKAYNEISGLQGDQFPRQQRPLSNSPSSNSISSSQTIEAGATSYQTQPQRHAVNKPSNVLNSSNRHSGPKTFEDGRYSEGNKPGFMTQDEIKQHCIGTIKASMDAVKKKSSYQILKTYVRCPRQNYIDIVYQNLNDLRSKTNCNIVVLNLNNLHESQMWLESLNTTNYTIFAQAPHPSTIRVISIGGVGEYIVKALELILNILEH</sequence>
<gene>
    <name type="primary">SNU56</name>
    <name type="synonym">MUD10</name>
    <name type="ordered locus">YDR240C</name>
</gene>
<name>SNU56_YEAST</name>
<protein>
    <recommendedName>
        <fullName>56 kDa U1 small nuclear ribonucleoprotein component</fullName>
    </recommendedName>
</protein>
<proteinExistence type="evidence at protein level"/>
<feature type="chain" id="PRO_0000232634" description="56 kDa U1 small nuclear ribonucleoprotein component">
    <location>
        <begin position="1"/>
        <end position="492"/>
    </location>
</feature>
<feature type="region of interest" description="Disordered" evidence="1">
    <location>
        <begin position="1"/>
        <end position="35"/>
    </location>
</feature>
<feature type="region of interest" description="Disordered" evidence="1">
    <location>
        <begin position="300"/>
        <end position="371"/>
    </location>
</feature>
<feature type="compositionally biased region" description="Basic residues" evidence="1">
    <location>
        <begin position="1"/>
        <end position="15"/>
    </location>
</feature>
<feature type="compositionally biased region" description="Polar residues" evidence="1">
    <location>
        <begin position="18"/>
        <end position="30"/>
    </location>
</feature>
<feature type="compositionally biased region" description="Low complexity" evidence="1">
    <location>
        <begin position="310"/>
        <end position="321"/>
    </location>
</feature>
<feature type="compositionally biased region" description="Polar residues" evidence="1">
    <location>
        <begin position="329"/>
        <end position="353"/>
    </location>
</feature>
<feature type="mutagenesis site" description="Loss of function." evidence="6">
    <original>S</original>
    <variation>F</variation>
    <location>
        <position position="125"/>
    </location>
</feature>
<feature type="helix" evidence="7">
    <location>
        <begin position="47"/>
        <end position="57"/>
    </location>
</feature>
<feature type="strand" evidence="7">
    <location>
        <begin position="58"/>
        <end position="60"/>
    </location>
</feature>
<feature type="strand" evidence="7">
    <location>
        <begin position="62"/>
        <end position="64"/>
    </location>
</feature>
<feature type="strand" evidence="7">
    <location>
        <begin position="69"/>
        <end position="75"/>
    </location>
</feature>
<feature type="helix" evidence="7">
    <location>
        <begin position="79"/>
        <end position="93"/>
    </location>
</feature>
<feature type="turn" evidence="7">
    <location>
        <begin position="95"/>
        <end position="97"/>
    </location>
</feature>
<feature type="strand" evidence="7">
    <location>
        <begin position="98"/>
        <end position="103"/>
    </location>
</feature>
<feature type="strand" evidence="7">
    <location>
        <begin position="112"/>
        <end position="119"/>
    </location>
</feature>
<feature type="helix" evidence="7">
    <location>
        <begin position="122"/>
        <end position="138"/>
    </location>
</feature>
<feature type="turn" evidence="8">
    <location>
        <begin position="143"/>
        <end position="145"/>
    </location>
</feature>
<feature type="strand" evidence="7">
    <location>
        <begin position="148"/>
        <end position="150"/>
    </location>
</feature>
<feature type="strand" evidence="7">
    <location>
        <begin position="157"/>
        <end position="165"/>
    </location>
</feature>
<feature type="strand" evidence="7">
    <location>
        <begin position="187"/>
        <end position="189"/>
    </location>
</feature>
<feature type="strand" evidence="7">
    <location>
        <begin position="194"/>
        <end position="206"/>
    </location>
</feature>
<feature type="helix" evidence="7">
    <location>
        <begin position="209"/>
        <end position="219"/>
    </location>
</feature>
<feature type="helix" evidence="7">
    <location>
        <begin position="231"/>
        <end position="251"/>
    </location>
</feature>
<feature type="turn" evidence="7">
    <location>
        <begin position="254"/>
        <end position="259"/>
    </location>
</feature>
<feature type="helix" evidence="7">
    <location>
        <begin position="263"/>
        <end position="292"/>
    </location>
</feature>
<evidence type="ECO:0000256" key="1">
    <source>
        <dbReference type="SAM" id="MobiDB-lite"/>
    </source>
</evidence>
<evidence type="ECO:0000269" key="2">
    <source>
    </source>
</evidence>
<evidence type="ECO:0000269" key="3">
    <source>
    </source>
</evidence>
<evidence type="ECO:0000269" key="4">
    <source>
    </source>
</evidence>
<evidence type="ECO:0000269" key="5">
    <source>
    </source>
</evidence>
<evidence type="ECO:0000269" key="6">
    <source>
    </source>
</evidence>
<evidence type="ECO:0007829" key="7">
    <source>
        <dbReference type="PDB" id="6N7R"/>
    </source>
</evidence>
<evidence type="ECO:0007829" key="8">
    <source>
        <dbReference type="PDB" id="8W2O"/>
    </source>
</evidence>
<organism>
    <name type="scientific">Saccharomyces cerevisiae (strain ATCC 204508 / S288c)</name>
    <name type="common">Baker's yeast</name>
    <dbReference type="NCBI Taxonomy" id="559292"/>
    <lineage>
        <taxon>Eukaryota</taxon>
        <taxon>Fungi</taxon>
        <taxon>Dikarya</taxon>
        <taxon>Ascomycota</taxon>
        <taxon>Saccharomycotina</taxon>
        <taxon>Saccharomycetes</taxon>
        <taxon>Saccharomycetales</taxon>
        <taxon>Saccharomycetaceae</taxon>
        <taxon>Saccharomyces</taxon>
    </lineage>
</organism>
<comment type="function">
    <text>Component of the U1 snRNP particle, which recognizes and binds the 5'-splice site of pre-mRNA. Together with other non-snRNP factors, U1 snRNP forms the spliceosomal commitment complex, that targets pre-mRNA to the splicing pathway.</text>
</comment>
<comment type="subunit">
    <text evidence="2 3 6">Component of the 18S U1 snRNP particle, a subcomplex of the spliceosome. Interacts with the nuclear cap-binding complex CBC1-CBC2 (yCBC). Directly contacts intronic sequences of substrate pre-RNA.</text>
</comment>
<comment type="subcellular location">
    <subcellularLocation>
        <location evidence="4">Nucleus</location>
    </subcellularLocation>
</comment>
<comment type="miscellaneous">
    <text evidence="5">Present with 361 molecules/cell in log phase SD medium.</text>
</comment>
<reference key="1">
    <citation type="journal article" date="1997" name="Nature">
        <title>The nucleotide sequence of Saccharomyces cerevisiae chromosome IV.</title>
        <authorList>
            <person name="Jacq C."/>
            <person name="Alt-Moerbe J."/>
            <person name="Andre B."/>
            <person name="Arnold W."/>
            <person name="Bahr A."/>
            <person name="Ballesta J.P.G."/>
            <person name="Bargues M."/>
            <person name="Baron L."/>
            <person name="Becker A."/>
            <person name="Biteau N."/>
            <person name="Bloecker H."/>
            <person name="Blugeon C."/>
            <person name="Boskovic J."/>
            <person name="Brandt P."/>
            <person name="Brueckner M."/>
            <person name="Buitrago M.J."/>
            <person name="Coster F."/>
            <person name="Delaveau T."/>
            <person name="del Rey F."/>
            <person name="Dujon B."/>
            <person name="Eide L.G."/>
            <person name="Garcia-Cantalejo J.M."/>
            <person name="Goffeau A."/>
            <person name="Gomez-Peris A."/>
            <person name="Granotier C."/>
            <person name="Hanemann V."/>
            <person name="Hankeln T."/>
            <person name="Hoheisel J.D."/>
            <person name="Jaeger W."/>
            <person name="Jimenez A."/>
            <person name="Jonniaux J.-L."/>
            <person name="Kraemer C."/>
            <person name="Kuester H."/>
            <person name="Laamanen P."/>
            <person name="Legros Y."/>
            <person name="Louis E.J."/>
            <person name="Moeller-Rieker S."/>
            <person name="Monnet A."/>
            <person name="Moro M."/>
            <person name="Mueller-Auer S."/>
            <person name="Nussbaumer B."/>
            <person name="Paricio N."/>
            <person name="Paulin L."/>
            <person name="Perea J."/>
            <person name="Perez-Alonso M."/>
            <person name="Perez-Ortin J.E."/>
            <person name="Pohl T.M."/>
            <person name="Prydz H."/>
            <person name="Purnelle B."/>
            <person name="Rasmussen S.W."/>
            <person name="Remacha M.A."/>
            <person name="Revuelta J.L."/>
            <person name="Rieger M."/>
            <person name="Salom D."/>
            <person name="Saluz H.P."/>
            <person name="Saiz J.E."/>
            <person name="Saren A.-M."/>
            <person name="Schaefer M."/>
            <person name="Scharfe M."/>
            <person name="Schmidt E.R."/>
            <person name="Schneider C."/>
            <person name="Scholler P."/>
            <person name="Schwarz S."/>
            <person name="Soler-Mira A."/>
            <person name="Urrestarazu L.A."/>
            <person name="Verhasselt P."/>
            <person name="Vissers S."/>
            <person name="Voet M."/>
            <person name="Volckaert G."/>
            <person name="Wagner G."/>
            <person name="Wambutt R."/>
            <person name="Wedler E."/>
            <person name="Wedler H."/>
            <person name="Woelfl S."/>
            <person name="Harris D.E."/>
            <person name="Bowman S."/>
            <person name="Brown D."/>
            <person name="Churcher C.M."/>
            <person name="Connor R."/>
            <person name="Dedman K."/>
            <person name="Gentles S."/>
            <person name="Hamlin N."/>
            <person name="Hunt S."/>
            <person name="Jones L."/>
            <person name="McDonald S."/>
            <person name="Murphy L.D."/>
            <person name="Niblett D."/>
            <person name="Odell C."/>
            <person name="Oliver K."/>
            <person name="Rajandream M.A."/>
            <person name="Richards C."/>
            <person name="Shore L."/>
            <person name="Walsh S.V."/>
            <person name="Barrell B.G."/>
            <person name="Dietrich F.S."/>
            <person name="Mulligan J.T."/>
            <person name="Allen E."/>
            <person name="Araujo R."/>
            <person name="Aviles E."/>
            <person name="Berno A."/>
            <person name="Carpenter J."/>
            <person name="Chen E."/>
            <person name="Cherry J.M."/>
            <person name="Chung E."/>
            <person name="Duncan M."/>
            <person name="Hunicke-Smith S."/>
            <person name="Hyman R.W."/>
            <person name="Komp C."/>
            <person name="Lashkari D."/>
            <person name="Lew H."/>
            <person name="Lin D."/>
            <person name="Mosedale D."/>
            <person name="Nakahara K."/>
            <person name="Namath A."/>
            <person name="Oefner P."/>
            <person name="Oh C."/>
            <person name="Petel F.X."/>
            <person name="Roberts D."/>
            <person name="Schramm S."/>
            <person name="Schroeder M."/>
            <person name="Shogren T."/>
            <person name="Shroff N."/>
            <person name="Winant A."/>
            <person name="Yelton M.A."/>
            <person name="Botstein D."/>
            <person name="Davis R.W."/>
            <person name="Johnston M."/>
            <person name="Andrews S."/>
            <person name="Brinkman R."/>
            <person name="Cooper J."/>
            <person name="Ding H."/>
            <person name="Du Z."/>
            <person name="Favello A."/>
            <person name="Fulton L."/>
            <person name="Gattung S."/>
            <person name="Greco T."/>
            <person name="Hallsworth K."/>
            <person name="Hawkins J."/>
            <person name="Hillier L.W."/>
            <person name="Jier M."/>
            <person name="Johnson D."/>
            <person name="Johnston L."/>
            <person name="Kirsten J."/>
            <person name="Kucaba T."/>
            <person name="Langston Y."/>
            <person name="Latreille P."/>
            <person name="Le T."/>
            <person name="Mardis E."/>
            <person name="Menezes S."/>
            <person name="Miller N."/>
            <person name="Nhan M."/>
            <person name="Pauley A."/>
            <person name="Peluso D."/>
            <person name="Rifkin L."/>
            <person name="Riles L."/>
            <person name="Taich A."/>
            <person name="Trevaskis E."/>
            <person name="Vignati D."/>
            <person name="Wilcox L."/>
            <person name="Wohldman P."/>
            <person name="Vaudin M."/>
            <person name="Wilson R."/>
            <person name="Waterston R."/>
            <person name="Albermann K."/>
            <person name="Hani J."/>
            <person name="Heumann K."/>
            <person name="Kleine K."/>
            <person name="Mewes H.-W."/>
            <person name="Zollner A."/>
            <person name="Zaccaria P."/>
        </authorList>
    </citation>
    <scope>NUCLEOTIDE SEQUENCE [LARGE SCALE GENOMIC DNA]</scope>
    <source>
        <strain>ATCC 204508 / S288c</strain>
    </source>
</reference>
<reference key="2">
    <citation type="journal article" date="2014" name="G3 (Bethesda)">
        <title>The reference genome sequence of Saccharomyces cerevisiae: Then and now.</title>
        <authorList>
            <person name="Engel S.R."/>
            <person name="Dietrich F.S."/>
            <person name="Fisk D.G."/>
            <person name="Binkley G."/>
            <person name="Balakrishnan R."/>
            <person name="Costanzo M.C."/>
            <person name="Dwight S.S."/>
            <person name="Hitz B.C."/>
            <person name="Karra K."/>
            <person name="Nash R.S."/>
            <person name="Weng S."/>
            <person name="Wong E.D."/>
            <person name="Lloyd P."/>
            <person name="Skrzypek M.S."/>
            <person name="Miyasato S.R."/>
            <person name="Simison M."/>
            <person name="Cherry J.M."/>
        </authorList>
    </citation>
    <scope>GENOME REANNOTATION</scope>
    <source>
        <strain>ATCC 204508 / S288c</strain>
    </source>
</reference>
<reference key="3">
    <citation type="journal article" date="2007" name="Genome Res.">
        <title>Approaching a complete repository of sequence-verified protein-encoding clones for Saccharomyces cerevisiae.</title>
        <authorList>
            <person name="Hu Y."/>
            <person name="Rolfs A."/>
            <person name="Bhullar B."/>
            <person name="Murthy T.V.S."/>
            <person name="Zhu C."/>
            <person name="Berger M.F."/>
            <person name="Camargo A.A."/>
            <person name="Kelley F."/>
            <person name="McCarron S."/>
            <person name="Jepson D."/>
            <person name="Richardson A."/>
            <person name="Raphael J."/>
            <person name="Moreira D."/>
            <person name="Taycher E."/>
            <person name="Zuo D."/>
            <person name="Mohr S."/>
            <person name="Kane M.F."/>
            <person name="Williamson J."/>
            <person name="Simpson A.J.G."/>
            <person name="Bulyk M.L."/>
            <person name="Harlow E."/>
            <person name="Marsischky G."/>
            <person name="Kolodner R.D."/>
            <person name="LaBaer J."/>
        </authorList>
    </citation>
    <scope>NUCLEOTIDE SEQUENCE [GENOMIC DNA]</scope>
    <source>
        <strain>ATCC 204508 / S288c</strain>
    </source>
</reference>
<reference key="4">
    <citation type="journal article" date="1998" name="RNA">
        <title>A comprehensive biochemical and genetic analysis of the yeast U1 snRNP reveals five novel proteins.</title>
        <authorList>
            <person name="Gottschalk A."/>
            <person name="Tang J."/>
            <person name="Puig O."/>
            <person name="Salgado J."/>
            <person name="Neubauer G."/>
            <person name="Colot H.V."/>
            <person name="Mann M."/>
            <person name="Seraphin B."/>
            <person name="Rosbash M."/>
            <person name="Luehrmann R."/>
            <person name="Fabrizio P."/>
        </authorList>
    </citation>
    <scope>PROTEIN SEQUENCE OF 154-171 AND 290-304</scope>
    <scope>IDENTIFICATION IN U1 SNRNP COMPLEX</scope>
    <scope>MUTAGENESIS OF SER-125</scope>
</reference>
<reference key="5">
    <citation type="journal article" date="1999" name="Genes Dev.">
        <title>Identification of eight proteins that cross-link to pre-mRNA in the yeast commitment complex.</title>
        <authorList>
            <person name="Zhang D."/>
            <person name="Rosbash M."/>
        </authorList>
    </citation>
    <scope>RNA-BINDING</scope>
</reference>
<reference key="6">
    <citation type="journal article" date="1999" name="Mol. Cell. Biol.">
        <title>Genetic and physical interactions involving the yeast nuclear cap-binding complex.</title>
        <authorList>
            <person name="Fortes P."/>
            <person name="Kufel J."/>
            <person name="Fornerod M."/>
            <person name="Polycarpou-Schwarz M."/>
            <person name="Lafontaine D."/>
            <person name="Tollervey D."/>
            <person name="Mattaj I.W."/>
        </authorList>
    </citation>
    <scope>INTERACTION WITH CBC1-CBC2</scope>
</reference>
<reference key="7">
    <citation type="journal article" date="2002" name="Mol. Cell">
        <title>Composition and functional characterization of the yeast spliceosomal penta-snRNP.</title>
        <authorList>
            <person name="Stevens S.W."/>
            <person name="Ryan D.E."/>
            <person name="Ge H.Y."/>
            <person name="Moore R.E."/>
            <person name="Young M.K."/>
            <person name="Lee T.D."/>
            <person name="Abelson J."/>
        </authorList>
    </citation>
    <scope>IDENTIFICATION IN U1.U2.U4/U6.U5 PENTA-SNRNP COMPLEX</scope>
    <scope>IDENTIFICATION BY MASS SPECTROMETRY</scope>
</reference>
<reference key="8">
    <citation type="journal article" date="2003" name="Nature">
        <title>Global analysis of protein localization in budding yeast.</title>
        <authorList>
            <person name="Huh W.-K."/>
            <person name="Falvo J.V."/>
            <person name="Gerke L.C."/>
            <person name="Carroll A.S."/>
            <person name="Howson R.W."/>
            <person name="Weissman J.S."/>
            <person name="O'Shea E.K."/>
        </authorList>
    </citation>
    <scope>SUBCELLULAR LOCATION [LARGE SCALE ANALYSIS]</scope>
</reference>
<reference key="9">
    <citation type="journal article" date="2003" name="Nature">
        <title>Global analysis of protein expression in yeast.</title>
        <authorList>
            <person name="Ghaemmaghami S."/>
            <person name="Huh W.-K."/>
            <person name="Bower K."/>
            <person name="Howson R.W."/>
            <person name="Belle A."/>
            <person name="Dephoure N."/>
            <person name="O'Shea E.K."/>
            <person name="Weissman J.S."/>
        </authorList>
    </citation>
    <scope>LEVEL OF PROTEIN EXPRESSION [LARGE SCALE ANALYSIS]</scope>
</reference>
<reference key="10">
    <citation type="journal article" date="2009" name="Science">
        <title>Global analysis of Cdk1 substrate phosphorylation sites provides insights into evolution.</title>
        <authorList>
            <person name="Holt L.J."/>
            <person name="Tuch B.B."/>
            <person name="Villen J."/>
            <person name="Johnson A.D."/>
            <person name="Gygi S.P."/>
            <person name="Morgan D.O."/>
        </authorList>
    </citation>
    <scope>IDENTIFICATION BY MASS SPECTROMETRY [LARGE SCALE ANALYSIS]</scope>
</reference>
<keyword id="KW-0002">3D-structure</keyword>
<keyword id="KW-0903">Direct protein sequencing</keyword>
<keyword id="KW-0507">mRNA processing</keyword>
<keyword id="KW-0508">mRNA splicing</keyword>
<keyword id="KW-0539">Nucleus</keyword>
<keyword id="KW-1185">Reference proteome</keyword>
<keyword id="KW-0687">Ribonucleoprotein</keyword>
<keyword id="KW-0694">RNA-binding</keyword>
<keyword id="KW-0747">Spliceosome</keyword>
<accession>Q03782</accession>
<accession>D6VSM1</accession>